<evidence type="ECO:0000255" key="1">
    <source>
        <dbReference type="HAMAP-Rule" id="MF_01283"/>
    </source>
</evidence>
<accession>B0K0Y9</accession>
<organism>
    <name type="scientific">Thermoanaerobacter sp. (strain X514)</name>
    <dbReference type="NCBI Taxonomy" id="399726"/>
    <lineage>
        <taxon>Bacteria</taxon>
        <taxon>Bacillati</taxon>
        <taxon>Bacillota</taxon>
        <taxon>Clostridia</taxon>
        <taxon>Thermoanaerobacterales</taxon>
        <taxon>Thermoanaerobacteraceae</taxon>
        <taxon>Thermoanaerobacter</taxon>
    </lineage>
</organism>
<gene>
    <name evidence="1" type="primary">ribBA</name>
    <name type="ordered locus">Teth514_0022</name>
</gene>
<proteinExistence type="inferred from homology"/>
<reference key="1">
    <citation type="submission" date="2008-01" db="EMBL/GenBank/DDBJ databases">
        <title>Complete sequence of Thermoanaerobacter sp. X514.</title>
        <authorList>
            <consortium name="US DOE Joint Genome Institute"/>
            <person name="Copeland A."/>
            <person name="Lucas S."/>
            <person name="Lapidus A."/>
            <person name="Barry K."/>
            <person name="Glavina del Rio T."/>
            <person name="Dalin E."/>
            <person name="Tice H."/>
            <person name="Pitluck S."/>
            <person name="Bruce D."/>
            <person name="Goodwin L."/>
            <person name="Saunders E."/>
            <person name="Brettin T."/>
            <person name="Detter J.C."/>
            <person name="Han C."/>
            <person name="Schmutz J."/>
            <person name="Larimer F."/>
            <person name="Land M."/>
            <person name="Hauser L."/>
            <person name="Kyrpides N."/>
            <person name="Kim E."/>
            <person name="Hemme C."/>
            <person name="Fields M.W."/>
            <person name="He Z."/>
            <person name="Zhou J."/>
            <person name="Richardson P."/>
        </authorList>
    </citation>
    <scope>NUCLEOTIDE SEQUENCE [LARGE SCALE GENOMIC DNA]</scope>
    <source>
        <strain>X514</strain>
    </source>
</reference>
<protein>
    <recommendedName>
        <fullName evidence="1">Riboflavin biosynthesis protein RibBA</fullName>
    </recommendedName>
    <domain>
        <recommendedName>
            <fullName evidence="1">3,4-dihydroxy-2-butanone 4-phosphate synthase</fullName>
            <shortName evidence="1">DHBP synthase</shortName>
            <ecNumber evidence="1">4.1.99.12</ecNumber>
        </recommendedName>
    </domain>
    <domain>
        <recommendedName>
            <fullName evidence="1">GTP cyclohydrolase-2</fullName>
            <ecNumber evidence="1">3.5.4.25</ecNumber>
        </recommendedName>
        <alternativeName>
            <fullName evidence="1">GTP cyclohydrolase II</fullName>
        </alternativeName>
    </domain>
</protein>
<dbReference type="EC" id="4.1.99.12" evidence="1"/>
<dbReference type="EC" id="3.5.4.25" evidence="1"/>
<dbReference type="EMBL" id="CP000923">
    <property type="protein sequence ID" value="ABY91346.1"/>
    <property type="molecule type" value="Genomic_DNA"/>
</dbReference>
<dbReference type="RefSeq" id="WP_009052037.1">
    <property type="nucleotide sequence ID" value="NC_010320.1"/>
</dbReference>
<dbReference type="SMR" id="B0K0Y9"/>
<dbReference type="KEGG" id="tex:Teth514_0022"/>
<dbReference type="HOGENOM" id="CLU_020273_1_2_9"/>
<dbReference type="UniPathway" id="UPA00275">
    <property type="reaction ID" value="UER00399"/>
</dbReference>
<dbReference type="UniPathway" id="UPA00275">
    <property type="reaction ID" value="UER00400"/>
</dbReference>
<dbReference type="Proteomes" id="UP000002155">
    <property type="component" value="Chromosome"/>
</dbReference>
<dbReference type="GO" id="GO:0005829">
    <property type="term" value="C:cytosol"/>
    <property type="evidence" value="ECO:0007669"/>
    <property type="project" value="TreeGrafter"/>
</dbReference>
<dbReference type="GO" id="GO:0008686">
    <property type="term" value="F:3,4-dihydroxy-2-butanone-4-phosphate synthase activity"/>
    <property type="evidence" value="ECO:0007669"/>
    <property type="project" value="UniProtKB-UniRule"/>
</dbReference>
<dbReference type="GO" id="GO:0005525">
    <property type="term" value="F:GTP binding"/>
    <property type="evidence" value="ECO:0007669"/>
    <property type="project" value="UniProtKB-KW"/>
</dbReference>
<dbReference type="GO" id="GO:0003935">
    <property type="term" value="F:GTP cyclohydrolase II activity"/>
    <property type="evidence" value="ECO:0007669"/>
    <property type="project" value="UniProtKB-UniRule"/>
</dbReference>
<dbReference type="GO" id="GO:0000287">
    <property type="term" value="F:magnesium ion binding"/>
    <property type="evidence" value="ECO:0007669"/>
    <property type="project" value="UniProtKB-UniRule"/>
</dbReference>
<dbReference type="GO" id="GO:0030145">
    <property type="term" value="F:manganese ion binding"/>
    <property type="evidence" value="ECO:0007669"/>
    <property type="project" value="UniProtKB-UniRule"/>
</dbReference>
<dbReference type="GO" id="GO:0008270">
    <property type="term" value="F:zinc ion binding"/>
    <property type="evidence" value="ECO:0007669"/>
    <property type="project" value="UniProtKB-UniRule"/>
</dbReference>
<dbReference type="GO" id="GO:0009231">
    <property type="term" value="P:riboflavin biosynthetic process"/>
    <property type="evidence" value="ECO:0007669"/>
    <property type="project" value="UniProtKB-UniRule"/>
</dbReference>
<dbReference type="CDD" id="cd00641">
    <property type="entry name" value="GTP_cyclohydro2"/>
    <property type="match status" value="1"/>
</dbReference>
<dbReference type="FunFam" id="3.40.50.10990:FF:000001">
    <property type="entry name" value="Riboflavin biosynthesis protein RibBA"/>
    <property type="match status" value="1"/>
</dbReference>
<dbReference type="FunFam" id="3.90.870.10:FF:000001">
    <property type="entry name" value="Riboflavin biosynthesis protein RibBA"/>
    <property type="match status" value="1"/>
</dbReference>
<dbReference type="Gene3D" id="3.90.870.10">
    <property type="entry name" value="DHBP synthase"/>
    <property type="match status" value="1"/>
</dbReference>
<dbReference type="Gene3D" id="3.40.50.10990">
    <property type="entry name" value="GTP cyclohydrolase II"/>
    <property type="match status" value="1"/>
</dbReference>
<dbReference type="HAMAP" id="MF_00179">
    <property type="entry name" value="RibA"/>
    <property type="match status" value="1"/>
</dbReference>
<dbReference type="HAMAP" id="MF_00180">
    <property type="entry name" value="RibB"/>
    <property type="match status" value="1"/>
</dbReference>
<dbReference type="HAMAP" id="MF_01283">
    <property type="entry name" value="RibBA"/>
    <property type="match status" value="1"/>
</dbReference>
<dbReference type="InterPro" id="IPR017945">
    <property type="entry name" value="DHBP_synth_RibB-like_a/b_dom"/>
</dbReference>
<dbReference type="InterPro" id="IPR000422">
    <property type="entry name" value="DHBP_synthase_RibB"/>
</dbReference>
<dbReference type="InterPro" id="IPR032677">
    <property type="entry name" value="GTP_cyclohydro_II"/>
</dbReference>
<dbReference type="InterPro" id="IPR000926">
    <property type="entry name" value="RibA"/>
</dbReference>
<dbReference type="InterPro" id="IPR036144">
    <property type="entry name" value="RibA-like_sf"/>
</dbReference>
<dbReference type="InterPro" id="IPR016299">
    <property type="entry name" value="Riboflavin_synth_RibBA"/>
</dbReference>
<dbReference type="NCBIfam" id="NF001591">
    <property type="entry name" value="PRK00393.1"/>
    <property type="match status" value="1"/>
</dbReference>
<dbReference type="NCBIfam" id="NF006803">
    <property type="entry name" value="PRK09311.1"/>
    <property type="match status" value="1"/>
</dbReference>
<dbReference type="NCBIfam" id="TIGR00505">
    <property type="entry name" value="ribA"/>
    <property type="match status" value="1"/>
</dbReference>
<dbReference type="NCBIfam" id="TIGR00506">
    <property type="entry name" value="ribB"/>
    <property type="match status" value="1"/>
</dbReference>
<dbReference type="PANTHER" id="PTHR21327:SF18">
    <property type="entry name" value="3,4-DIHYDROXY-2-BUTANONE 4-PHOSPHATE SYNTHASE"/>
    <property type="match status" value="1"/>
</dbReference>
<dbReference type="PANTHER" id="PTHR21327">
    <property type="entry name" value="GTP CYCLOHYDROLASE II-RELATED"/>
    <property type="match status" value="1"/>
</dbReference>
<dbReference type="Pfam" id="PF00926">
    <property type="entry name" value="DHBP_synthase"/>
    <property type="match status" value="1"/>
</dbReference>
<dbReference type="Pfam" id="PF00925">
    <property type="entry name" value="GTP_cyclohydro2"/>
    <property type="match status" value="1"/>
</dbReference>
<dbReference type="PIRSF" id="PIRSF001259">
    <property type="entry name" value="RibA"/>
    <property type="match status" value="1"/>
</dbReference>
<dbReference type="SUPFAM" id="SSF142695">
    <property type="entry name" value="RibA-like"/>
    <property type="match status" value="1"/>
</dbReference>
<dbReference type="SUPFAM" id="SSF55821">
    <property type="entry name" value="YrdC/RibB"/>
    <property type="match status" value="1"/>
</dbReference>
<keyword id="KW-0342">GTP-binding</keyword>
<keyword id="KW-0378">Hydrolase</keyword>
<keyword id="KW-0456">Lyase</keyword>
<keyword id="KW-0460">Magnesium</keyword>
<keyword id="KW-0464">Manganese</keyword>
<keyword id="KW-0479">Metal-binding</keyword>
<keyword id="KW-0511">Multifunctional enzyme</keyword>
<keyword id="KW-0547">Nucleotide-binding</keyword>
<keyword id="KW-0686">Riboflavin biosynthesis</keyword>
<keyword id="KW-0862">Zinc</keyword>
<sequence>MFDRIEDAIEDIKQGKMIIVVDDENRENEGDLVMAAEKVTGEHINFMIKYGRGLVCVPMTEKRLNELGIYQMVENNTDHKETAFTVSVDYKECTTGISAFERALTVKKLVDDNSKPEDFTKPGHIFPLRAKDGGVLVRAGHTEAAVDLAVLAGLKPAGVICEIIKDDGNMARLPDLLEFAKKFGLRIISIEDLIKYRMKNEILVRRVAQAKLPTKYGNFEIVGYEEILTGKQHVALIKGDVNKEPVLVRIHSECLTGDILGSLRCDCGDQLHAAMERIGQEGGILVYLRQEGRGIGLLNKIKAYHLQDQGLDTVEANIKLGFPPDLREYNIAAQILKDIGVKKIRIMTNNPQKITELSDYGLDVVERVSIEICPNHYNEKYLKTKKEKMGHLILEV</sequence>
<comment type="function">
    <text evidence="1">Catalyzes the conversion of D-ribulose 5-phosphate to formate and 3,4-dihydroxy-2-butanone 4-phosphate.</text>
</comment>
<comment type="function">
    <text evidence="1">Catalyzes the conversion of GTP to 2,5-diamino-6-ribosylamino-4(3H)-pyrimidinone 5'-phosphate (DARP), formate and pyrophosphate.</text>
</comment>
<comment type="catalytic activity">
    <reaction evidence="1">
        <text>D-ribulose 5-phosphate = (2S)-2-hydroxy-3-oxobutyl phosphate + formate + H(+)</text>
        <dbReference type="Rhea" id="RHEA:18457"/>
        <dbReference type="ChEBI" id="CHEBI:15378"/>
        <dbReference type="ChEBI" id="CHEBI:15740"/>
        <dbReference type="ChEBI" id="CHEBI:58121"/>
        <dbReference type="ChEBI" id="CHEBI:58830"/>
        <dbReference type="EC" id="4.1.99.12"/>
    </reaction>
</comment>
<comment type="catalytic activity">
    <reaction evidence="1">
        <text>GTP + 4 H2O = 2,5-diamino-6-hydroxy-4-(5-phosphoribosylamino)-pyrimidine + formate + 2 phosphate + 3 H(+)</text>
        <dbReference type="Rhea" id="RHEA:23704"/>
        <dbReference type="ChEBI" id="CHEBI:15377"/>
        <dbReference type="ChEBI" id="CHEBI:15378"/>
        <dbReference type="ChEBI" id="CHEBI:15740"/>
        <dbReference type="ChEBI" id="CHEBI:37565"/>
        <dbReference type="ChEBI" id="CHEBI:43474"/>
        <dbReference type="ChEBI" id="CHEBI:58614"/>
        <dbReference type="EC" id="3.5.4.25"/>
    </reaction>
</comment>
<comment type="cofactor">
    <cofactor evidence="1">
        <name>Mg(2+)</name>
        <dbReference type="ChEBI" id="CHEBI:18420"/>
    </cofactor>
    <cofactor evidence="1">
        <name>Mn(2+)</name>
        <dbReference type="ChEBI" id="CHEBI:29035"/>
    </cofactor>
    <text evidence="1">Binds 2 divalent metal cations per subunit. Magnesium or manganese.</text>
</comment>
<comment type="cofactor">
    <cofactor evidence="1">
        <name>Zn(2+)</name>
        <dbReference type="ChEBI" id="CHEBI:29105"/>
    </cofactor>
    <text evidence="1">Binds 1 zinc ion per subunit.</text>
</comment>
<comment type="pathway">
    <text evidence="1">Cofactor biosynthesis; riboflavin biosynthesis; 2-hydroxy-3-oxobutyl phosphate from D-ribulose 5-phosphate: step 1/1.</text>
</comment>
<comment type="pathway">
    <text evidence="1">Cofactor biosynthesis; riboflavin biosynthesis; 5-amino-6-(D-ribitylamino)uracil from GTP: step 1/4.</text>
</comment>
<comment type="similarity">
    <text evidence="1">In the N-terminal section; belongs to the DHBP synthase family.</text>
</comment>
<comment type="similarity">
    <text evidence="1">In the C-terminal section; belongs to the GTP cyclohydrolase II family.</text>
</comment>
<name>RIBBA_THEPX</name>
<feature type="chain" id="PRO_1000140368" description="Riboflavin biosynthesis protein RibBA">
    <location>
        <begin position="1"/>
        <end position="396"/>
    </location>
</feature>
<feature type="region of interest" description="DHBP synthase">
    <location>
        <begin position="1"/>
        <end position="199"/>
    </location>
</feature>
<feature type="region of interest" description="GTP cyclohydrolase II">
    <location>
        <begin position="200"/>
        <end position="396"/>
    </location>
</feature>
<feature type="active site" description="Proton acceptor; for GTP cyclohydrolase activity" evidence="1">
    <location>
        <position position="325"/>
    </location>
</feature>
<feature type="active site" description="Nucleophile; for GTP cyclohydrolase activity" evidence="1">
    <location>
        <position position="327"/>
    </location>
</feature>
<feature type="binding site" evidence="1">
    <location>
        <begin position="26"/>
        <end position="27"/>
    </location>
    <ligand>
        <name>D-ribulose 5-phosphate</name>
        <dbReference type="ChEBI" id="CHEBI:58121"/>
    </ligand>
</feature>
<feature type="binding site" evidence="1">
    <location>
        <position position="27"/>
    </location>
    <ligand>
        <name>Mg(2+)</name>
        <dbReference type="ChEBI" id="CHEBI:18420"/>
        <label>1</label>
    </ligand>
</feature>
<feature type="binding site" evidence="1">
    <location>
        <position position="27"/>
    </location>
    <ligand>
        <name>Mg(2+)</name>
        <dbReference type="ChEBI" id="CHEBI:18420"/>
        <label>2</label>
    </ligand>
</feature>
<feature type="binding site" evidence="1">
    <location>
        <position position="31"/>
    </location>
    <ligand>
        <name>D-ribulose 5-phosphate</name>
        <dbReference type="ChEBI" id="CHEBI:58121"/>
    </ligand>
</feature>
<feature type="binding site" evidence="1">
    <location>
        <begin position="138"/>
        <end position="142"/>
    </location>
    <ligand>
        <name>D-ribulose 5-phosphate</name>
        <dbReference type="ChEBI" id="CHEBI:58121"/>
    </ligand>
</feature>
<feature type="binding site" evidence="1">
    <location>
        <position position="141"/>
    </location>
    <ligand>
        <name>Mg(2+)</name>
        <dbReference type="ChEBI" id="CHEBI:18420"/>
        <label>2</label>
    </ligand>
</feature>
<feature type="binding site" evidence="1">
    <location>
        <position position="162"/>
    </location>
    <ligand>
        <name>D-ribulose 5-phosphate</name>
        <dbReference type="ChEBI" id="CHEBI:58121"/>
    </ligand>
</feature>
<feature type="binding site" evidence="1">
    <location>
        <begin position="249"/>
        <end position="253"/>
    </location>
    <ligand>
        <name>GTP</name>
        <dbReference type="ChEBI" id="CHEBI:37565"/>
    </ligand>
</feature>
<feature type="binding site" evidence="1">
    <location>
        <position position="254"/>
    </location>
    <ligand>
        <name>Zn(2+)</name>
        <dbReference type="ChEBI" id="CHEBI:29105"/>
        <note>catalytic</note>
    </ligand>
</feature>
<feature type="binding site" evidence="1">
    <location>
        <position position="265"/>
    </location>
    <ligand>
        <name>Zn(2+)</name>
        <dbReference type="ChEBI" id="CHEBI:29105"/>
        <note>catalytic</note>
    </ligand>
</feature>
<feature type="binding site" evidence="1">
    <location>
        <position position="267"/>
    </location>
    <ligand>
        <name>Zn(2+)</name>
        <dbReference type="ChEBI" id="CHEBI:29105"/>
        <note>catalytic</note>
    </ligand>
</feature>
<feature type="binding site" evidence="1">
    <location>
        <position position="270"/>
    </location>
    <ligand>
        <name>GTP</name>
        <dbReference type="ChEBI" id="CHEBI:37565"/>
    </ligand>
</feature>
<feature type="binding site" evidence="1">
    <location>
        <begin position="291"/>
        <end position="293"/>
    </location>
    <ligand>
        <name>GTP</name>
        <dbReference type="ChEBI" id="CHEBI:37565"/>
    </ligand>
</feature>
<feature type="binding site" evidence="1">
    <location>
        <position position="313"/>
    </location>
    <ligand>
        <name>GTP</name>
        <dbReference type="ChEBI" id="CHEBI:37565"/>
    </ligand>
</feature>
<feature type="binding site" evidence="1">
    <location>
        <position position="348"/>
    </location>
    <ligand>
        <name>GTP</name>
        <dbReference type="ChEBI" id="CHEBI:37565"/>
    </ligand>
</feature>
<feature type="binding site" evidence="1">
    <location>
        <position position="353"/>
    </location>
    <ligand>
        <name>GTP</name>
        <dbReference type="ChEBI" id="CHEBI:37565"/>
    </ligand>
</feature>
<feature type="site" description="Essential for DHBP synthase activity" evidence="1">
    <location>
        <position position="124"/>
    </location>
</feature>
<feature type="site" description="Essential for DHBP synthase activity" evidence="1">
    <location>
        <position position="162"/>
    </location>
</feature>